<reference key="1">
    <citation type="journal article" date="2011" name="Toxicon">
        <title>A high-throughput venom-gland transcriptome for the eastern diamondback rattlesnake (Crotalus adamanteus) and evidence for pervasive positive selection across toxin classes.</title>
        <authorList>
            <person name="Rokyta D.R."/>
            <person name="Wray K.P."/>
            <person name="Lemmon A.R."/>
            <person name="Lemmon E.M."/>
            <person name="Caudle S.B."/>
        </authorList>
    </citation>
    <scope>NUCLEOTIDE SEQUENCE [MRNA]</scope>
    <source>
        <tissue>Venom gland</tissue>
    </source>
</reference>
<reference key="2">
    <citation type="journal article" date="1999" name="Thromb. Haemost.">
        <title>Crotalase, a fibrinogen-clotting snake venom enzyme: primary structure and evidence for a fibrinogen recognition exosite different from thrombin.</title>
        <authorList>
            <person name="Henschen-Edman A.H."/>
            <person name="Theodor I."/>
            <person name="Edwards B.F."/>
            <person name="Pirkle H."/>
        </authorList>
    </citation>
    <scope>PROTEIN SEQUENCE OF 25-262</scope>
    <scope>FUNCTION</scope>
    <scope>GLYCOSYLATION</scope>
    <scope>3D-STRUCTURE MODELING</scope>
    <source>
        <tissue>Venom</tissue>
    </source>
</reference>
<reference key="3">
    <citation type="journal article" date="1971" name="J. Biol. Chem.">
        <title>Purification and properties of a thrombin-like enzyme from the venom of Crotalus adamanteus (Eastern diamondback rattlesnake).</title>
        <authorList>
            <person name="Markland F.S."/>
            <person name="Damus P.S."/>
        </authorList>
    </citation>
    <scope>FUNCTION</scope>
</reference>
<reference key="4">
    <citation type="journal article" date="1976" name="Toxicon">
        <title>Characterization of a thrombin-like enzyme from Crotalus adamanteus (Eastern diamondback rattlesnake).</title>
        <authorList>
            <person name="Markland F.S."/>
            <person name="Pirkle H."/>
        </authorList>
    </citation>
    <scope>FUNCTION</scope>
</reference>
<reference key="5">
    <citation type="journal article" date="1977" name="Thromb. Res.">
        <title>Thrombin-like enzyme from the venom of Crotalus adamanteus (eastern diamondback rattlesnake).</title>
        <authorList>
            <person name="Markland F.S."/>
            <person name="Pirkle H."/>
        </authorList>
    </citation>
    <scope>FUNCTION</scope>
</reference>
<reference key="6">
    <citation type="journal article" date="1982" name="Proc. Natl. Acad. Sci. U.S.A.">
        <title>Kallikrein-like activity of crotalase, a snake venom enzyme that clots fibrinogen.</title>
        <authorList>
            <person name="Markland F.S."/>
            <person name="Kettner C."/>
            <person name="Schiffman S."/>
            <person name="Shaw E."/>
            <person name="Bajwa S.S."/>
            <person name="Reddy K.N."/>
            <person name="Kirakossian H."/>
            <person name="Patkos G.B."/>
            <person name="Theodor I."/>
            <person name="Pirkle H."/>
        </authorList>
    </citation>
    <scope>FUNCTION</scope>
</reference>
<sequence length="262" mass="29457">MVLIRVLANLLILQLSYAQKSSELVIGGDECNINEHRFLVALYDYWSQSFLCGGTLINEEWVLTAKHCDRTHILIYVGVHDRSVQFDKEQRRFPKEKYFFDCSNNFTKWDKDIMLIRLNKPVSYSEHIAPLSLPSSPPIVGSVCRAMGWGQTTSPQETLPDVPHCANINLLDYEVCRTAHPQFRLPATSRTLCAGVLEGGIDTCNRDSGGPLICNGQFQGIVFWGPDPCAQPDKPGLYTKVFDHLDWIQSIIAGEKTVNCPP</sequence>
<evidence type="ECO:0000250" key="1"/>
<evidence type="ECO:0000255" key="2"/>
<evidence type="ECO:0000255" key="3">
    <source>
        <dbReference type="PROSITE-ProRule" id="PRU00274"/>
    </source>
</evidence>
<evidence type="ECO:0000269" key="4">
    <source>
    </source>
</evidence>
<evidence type="ECO:0000269" key="5">
    <source>
    </source>
</evidence>
<evidence type="ECO:0000269" key="6">
    <source>
    </source>
</evidence>
<evidence type="ECO:0000269" key="7">
    <source>
    </source>
</evidence>
<evidence type="ECO:0000269" key="8">
    <source>
    </source>
</evidence>
<evidence type="ECO:0000305" key="9"/>
<dbReference type="EC" id="3.4.21.74"/>
<dbReference type="EMBL" id="HQ414118">
    <property type="protein sequence ID" value="AEJ31996.1"/>
    <property type="molecule type" value="mRNA"/>
</dbReference>
<dbReference type="SMR" id="F8S114"/>
<dbReference type="MEROPS" id="S01.181"/>
<dbReference type="GO" id="GO:0005576">
    <property type="term" value="C:extracellular region"/>
    <property type="evidence" value="ECO:0007669"/>
    <property type="project" value="UniProtKB-SubCell"/>
</dbReference>
<dbReference type="GO" id="GO:0030141">
    <property type="term" value="C:secretory granule"/>
    <property type="evidence" value="ECO:0007669"/>
    <property type="project" value="TreeGrafter"/>
</dbReference>
<dbReference type="GO" id="GO:0004252">
    <property type="term" value="F:serine-type endopeptidase activity"/>
    <property type="evidence" value="ECO:0007669"/>
    <property type="project" value="InterPro"/>
</dbReference>
<dbReference type="GO" id="GO:0090729">
    <property type="term" value="F:toxin activity"/>
    <property type="evidence" value="ECO:0007669"/>
    <property type="project" value="UniProtKB-KW"/>
</dbReference>
<dbReference type="GO" id="GO:0006508">
    <property type="term" value="P:proteolysis"/>
    <property type="evidence" value="ECO:0007669"/>
    <property type="project" value="UniProtKB-KW"/>
</dbReference>
<dbReference type="GO" id="GO:0008217">
    <property type="term" value="P:regulation of blood pressure"/>
    <property type="evidence" value="ECO:0007669"/>
    <property type="project" value="UniProtKB-KW"/>
</dbReference>
<dbReference type="CDD" id="cd00190">
    <property type="entry name" value="Tryp_SPc"/>
    <property type="match status" value="1"/>
</dbReference>
<dbReference type="FunFam" id="2.40.10.10:FF:000158">
    <property type="entry name" value="Thrombin-like enzyme saxthrombin"/>
    <property type="match status" value="1"/>
</dbReference>
<dbReference type="Gene3D" id="2.40.10.10">
    <property type="entry name" value="Trypsin-like serine proteases"/>
    <property type="match status" value="2"/>
</dbReference>
<dbReference type="InterPro" id="IPR009003">
    <property type="entry name" value="Peptidase_S1_PA"/>
</dbReference>
<dbReference type="InterPro" id="IPR043504">
    <property type="entry name" value="Peptidase_S1_PA_chymotrypsin"/>
</dbReference>
<dbReference type="InterPro" id="IPR001314">
    <property type="entry name" value="Peptidase_S1A"/>
</dbReference>
<dbReference type="InterPro" id="IPR001254">
    <property type="entry name" value="Trypsin_dom"/>
</dbReference>
<dbReference type="PANTHER" id="PTHR24271:SF47">
    <property type="entry name" value="KALLIKREIN-1"/>
    <property type="match status" value="1"/>
</dbReference>
<dbReference type="PANTHER" id="PTHR24271">
    <property type="entry name" value="KALLIKREIN-RELATED"/>
    <property type="match status" value="1"/>
</dbReference>
<dbReference type="Pfam" id="PF00089">
    <property type="entry name" value="Trypsin"/>
    <property type="match status" value="1"/>
</dbReference>
<dbReference type="PRINTS" id="PR00722">
    <property type="entry name" value="CHYMOTRYPSIN"/>
</dbReference>
<dbReference type="SMART" id="SM00020">
    <property type="entry name" value="Tryp_SPc"/>
    <property type="match status" value="1"/>
</dbReference>
<dbReference type="SUPFAM" id="SSF50494">
    <property type="entry name" value="Trypsin-like serine proteases"/>
    <property type="match status" value="1"/>
</dbReference>
<dbReference type="PROSITE" id="PS50240">
    <property type="entry name" value="TRYPSIN_DOM"/>
    <property type="match status" value="1"/>
</dbReference>
<name>VSPCR_CROAD</name>
<feature type="signal peptide" evidence="2">
    <location>
        <begin position="1"/>
        <end position="18"/>
    </location>
</feature>
<feature type="propeptide" id="PRO_0000416597" evidence="5">
    <location>
        <begin position="19"/>
        <end position="24"/>
    </location>
</feature>
<feature type="chain" id="PRO_5000771379" description="Thrombin-like enzyme crotalase">
    <location>
        <begin position="25"/>
        <end position="262"/>
    </location>
</feature>
<feature type="domain" description="Peptidase S1" evidence="3">
    <location>
        <begin position="25"/>
        <end position="253"/>
    </location>
</feature>
<feature type="active site" description="Charge relay system" evidence="3">
    <location>
        <position position="67"/>
    </location>
</feature>
<feature type="active site" description="Charge relay system" evidence="3">
    <location>
        <position position="112"/>
    </location>
</feature>
<feature type="active site" description="Charge relay system" evidence="3">
    <location>
        <position position="208"/>
    </location>
</feature>
<feature type="glycosylation site" description="N-linked (GlcNAc...) asparagine" evidence="2">
    <location>
        <position position="105"/>
    </location>
</feature>
<feature type="disulfide bond" evidence="3">
    <location>
        <begin position="31"/>
        <end position="165"/>
    </location>
</feature>
<feature type="disulfide bond" evidence="3">
    <location>
        <begin position="52"/>
        <end position="68"/>
    </location>
</feature>
<feature type="disulfide bond" evidence="3">
    <location>
        <begin position="102"/>
        <end position="260"/>
    </location>
</feature>
<feature type="disulfide bond" evidence="3">
    <location>
        <begin position="144"/>
        <end position="214"/>
    </location>
</feature>
<feature type="disulfide bond" evidence="3">
    <location>
        <begin position="176"/>
        <end position="193"/>
    </location>
</feature>
<feature type="disulfide bond" evidence="3">
    <location>
        <begin position="204"/>
        <end position="229"/>
    </location>
</feature>
<feature type="sequence conflict" description="In Ref. 2; AA sequence." evidence="9" ref="2">
    <original>S</original>
    <variation>L</variation>
    <location>
        <position position="49"/>
    </location>
</feature>
<feature type="sequence conflict" description="In Ref. 2; AA sequence." evidence="9" ref="2">
    <original>E</original>
    <variation>N</variation>
    <location>
        <position position="59"/>
    </location>
</feature>
<feature type="sequence conflict" description="In Ref. 2; AA sequence." evidence="9" ref="2">
    <original>K</original>
    <variation>A</variation>
    <location>
        <position position="66"/>
    </location>
</feature>
<feature type="sequence conflict" description="In Ref. 2; AA sequence." evidence="9" ref="2">
    <location>
        <position position="262"/>
    </location>
</feature>
<accession>F8S114</accession>
<organism>
    <name type="scientific">Crotalus adamanteus</name>
    <name type="common">Eastern diamondback rattlesnake</name>
    <dbReference type="NCBI Taxonomy" id="8729"/>
    <lineage>
        <taxon>Eukaryota</taxon>
        <taxon>Metazoa</taxon>
        <taxon>Chordata</taxon>
        <taxon>Craniata</taxon>
        <taxon>Vertebrata</taxon>
        <taxon>Euteleostomi</taxon>
        <taxon>Lepidosauria</taxon>
        <taxon>Squamata</taxon>
        <taxon>Bifurcata</taxon>
        <taxon>Unidentata</taxon>
        <taxon>Episquamata</taxon>
        <taxon>Toxicofera</taxon>
        <taxon>Serpentes</taxon>
        <taxon>Colubroidea</taxon>
        <taxon>Viperidae</taxon>
        <taxon>Crotalinae</taxon>
        <taxon>Crotalus</taxon>
    </lineage>
</organism>
<protein>
    <recommendedName>
        <fullName>Thrombin-like enzyme crotalase</fullName>
        <shortName>SVTLE</shortName>
        <ecNumber>3.4.21.74</ecNumber>
    </recommendedName>
    <alternativeName>
        <fullName>Fibrinogen-clotting enzyme</fullName>
    </alternativeName>
    <alternativeName>
        <fullName>Snake venom serine protease 2</fullName>
        <shortName>SVSP</shortName>
    </alternativeName>
</protein>
<keyword id="KW-1204">Blood coagulation cascade activating toxin</keyword>
<keyword id="KW-0903">Direct protein sequencing</keyword>
<keyword id="KW-1015">Disulfide bond</keyword>
<keyword id="KW-0325">Glycoprotein</keyword>
<keyword id="KW-1199">Hemostasis impairing toxin</keyword>
<keyword id="KW-0378">Hydrolase</keyword>
<keyword id="KW-0382">Hypotensive agent</keyword>
<keyword id="KW-0645">Protease</keyword>
<keyword id="KW-0964">Secreted</keyword>
<keyword id="KW-0720">Serine protease</keyword>
<keyword id="KW-0732">Signal</keyword>
<keyword id="KW-0800">Toxin</keyword>
<proteinExistence type="evidence at protein level"/>
<comment type="function">
    <text evidence="4 5 6 7 8">Thrombin-like snake venom protein that release fibrinopeptide A from fibrinogen (FGA). Shows both kinin-releasing and coagulant activities.</text>
</comment>
<comment type="catalytic activity">
    <reaction>
        <text>Selective cleavage of Arg-|-Xaa bond in fibrinogen, to form fibrin, and release fibrinopeptide A. The specificity of further degradation of fibrinogen varies with species origin of the enzyme.</text>
        <dbReference type="EC" id="3.4.21.74"/>
    </reaction>
</comment>
<comment type="subunit">
    <text evidence="1">Monomer.</text>
</comment>
<comment type="subcellular location">
    <subcellularLocation>
        <location>Secreted</location>
    </subcellularLocation>
</comment>
<comment type="tissue specificity">
    <text>Expressed by the venom gland.</text>
</comment>
<comment type="PTM">
    <text evidence="5">N-glycosylated: contains mannose, galactose, N-acetylglucosamine, and fucose.</text>
</comment>
<comment type="similarity">
    <text evidence="3">Belongs to the peptidase S1 family. Snake venom subfamily.</text>
</comment>